<proteinExistence type="evidence at transcript level"/>
<evidence type="ECO:0000255" key="1">
    <source>
        <dbReference type="PROSITE-ProRule" id="PRU00080"/>
    </source>
</evidence>
<evidence type="ECO:0000305" key="2"/>
<protein>
    <recommendedName>
        <fullName>F-box/LRR-repeat protein At3g59190</fullName>
    </recommendedName>
</protein>
<gene>
    <name type="ordered locus">At3g59190</name>
    <name type="ORF">F25L23.50</name>
</gene>
<accession>Q1PED9</accession>
<accession>Q9LX52</accession>
<dbReference type="EMBL" id="AL356014">
    <property type="protein sequence ID" value="CAB91589.1"/>
    <property type="status" value="ALT_SEQ"/>
    <property type="molecule type" value="Genomic_DNA"/>
</dbReference>
<dbReference type="EMBL" id="CP002686">
    <property type="protein sequence ID" value="AEE79887.1"/>
    <property type="molecule type" value="Genomic_DNA"/>
</dbReference>
<dbReference type="EMBL" id="DQ446779">
    <property type="protein sequence ID" value="ABE66030.1"/>
    <property type="molecule type" value="mRNA"/>
</dbReference>
<dbReference type="PIR" id="T48987">
    <property type="entry name" value="T48987"/>
</dbReference>
<dbReference type="RefSeq" id="NP_191478.2">
    <property type="nucleotide sequence ID" value="NM_115781.3"/>
</dbReference>
<dbReference type="FunCoup" id="Q1PED9">
    <property type="interactions" value="67"/>
</dbReference>
<dbReference type="iPTMnet" id="Q1PED9"/>
<dbReference type="PaxDb" id="3702-AT3G59190.1"/>
<dbReference type="ProteomicsDB" id="222518"/>
<dbReference type="EnsemblPlants" id="AT3G59190.1">
    <property type="protein sequence ID" value="AT3G59190.1"/>
    <property type="gene ID" value="AT3G59190"/>
</dbReference>
<dbReference type="GeneID" id="825088"/>
<dbReference type="Gramene" id="AT3G59190.1">
    <property type="protein sequence ID" value="AT3G59190.1"/>
    <property type="gene ID" value="AT3G59190"/>
</dbReference>
<dbReference type="KEGG" id="ath:AT3G59190"/>
<dbReference type="Araport" id="AT3G59190"/>
<dbReference type="TAIR" id="AT3G59190"/>
<dbReference type="eggNOG" id="ENOG502RYTW">
    <property type="taxonomic scope" value="Eukaryota"/>
</dbReference>
<dbReference type="HOGENOM" id="CLU_010721_7_2_1"/>
<dbReference type="InParanoid" id="Q1PED9"/>
<dbReference type="OMA" id="PRESKIC"/>
<dbReference type="PhylomeDB" id="Q1PED9"/>
<dbReference type="PRO" id="PR:Q1PED9"/>
<dbReference type="Proteomes" id="UP000006548">
    <property type="component" value="Chromosome 3"/>
</dbReference>
<dbReference type="ExpressionAtlas" id="Q1PED9">
    <property type="expression patterns" value="baseline and differential"/>
</dbReference>
<dbReference type="CDD" id="cd22160">
    <property type="entry name" value="F-box_AtFBL13-like"/>
    <property type="match status" value="1"/>
</dbReference>
<dbReference type="Gene3D" id="1.20.1280.50">
    <property type="match status" value="1"/>
</dbReference>
<dbReference type="Gene3D" id="3.80.10.10">
    <property type="entry name" value="Ribonuclease Inhibitor"/>
    <property type="match status" value="1"/>
</dbReference>
<dbReference type="InterPro" id="IPR036047">
    <property type="entry name" value="F-box-like_dom_sf"/>
</dbReference>
<dbReference type="InterPro" id="IPR053781">
    <property type="entry name" value="F-box_AtFBL13-like"/>
</dbReference>
<dbReference type="InterPro" id="IPR001810">
    <property type="entry name" value="F-box_dom"/>
</dbReference>
<dbReference type="InterPro" id="IPR055294">
    <property type="entry name" value="FBL60-like"/>
</dbReference>
<dbReference type="InterPro" id="IPR032675">
    <property type="entry name" value="LRR_dom_sf"/>
</dbReference>
<dbReference type="InterPro" id="IPR055411">
    <property type="entry name" value="LRR_FXL15/At3g58940/PEG3-like"/>
</dbReference>
<dbReference type="PANTHER" id="PTHR31293">
    <property type="entry name" value="RNI-LIKE SUPERFAMILY PROTEIN"/>
    <property type="match status" value="1"/>
</dbReference>
<dbReference type="PANTHER" id="PTHR31293:SF16">
    <property type="entry name" value="RNI-LIKE SUPERFAMILY PROTEIN"/>
    <property type="match status" value="1"/>
</dbReference>
<dbReference type="Pfam" id="PF00646">
    <property type="entry name" value="F-box"/>
    <property type="match status" value="1"/>
</dbReference>
<dbReference type="Pfam" id="PF24758">
    <property type="entry name" value="LRR_At5g56370"/>
    <property type="match status" value="1"/>
</dbReference>
<dbReference type="SUPFAM" id="SSF81383">
    <property type="entry name" value="F-box domain"/>
    <property type="match status" value="1"/>
</dbReference>
<dbReference type="SUPFAM" id="SSF52047">
    <property type="entry name" value="RNI-like"/>
    <property type="match status" value="1"/>
</dbReference>
<dbReference type="PROSITE" id="PS50181">
    <property type="entry name" value="FBOX"/>
    <property type="match status" value="1"/>
</dbReference>
<keyword id="KW-0433">Leucine-rich repeat</keyword>
<keyword id="KW-1185">Reference proteome</keyword>
<keyword id="KW-0677">Repeat</keyword>
<name>FBL63_ARATH</name>
<sequence>MSSKRMDSGSKDIISNLPDALLCHVLSFLPTTEAASTSVLAKRWRFLLAFVPNLDLDNMIYDRPKMGRRKRLELRKSFKLFVDRVMALQGNAPLKKFSLRCKIGSDPSRVNGWVLKVLDRGVEELDLYIASEYEYPLPPKVLMTKTLVSLKVSGTDEFTIDVGEFFLPKLKTLHLSAISFGDEGGPPFAKLISACHALEELVMIKMMWDYWEFCSVSSPSLKRVSIDCENIDENPKSVSFDTPNLVYLEFTDTVAVKYPKVNFDSLVEASIGLRMTPDQVFDARDLVNRHHGYKRCKGANAADFMMGVCNVKTMYLSSEALEVLTFCCKKAIPVFNNLIHLTVETDERVDWESLPILLKNCPNLETLIFEVPSHILFLHDLTHFFSNT</sequence>
<organism>
    <name type="scientific">Arabidopsis thaliana</name>
    <name type="common">Mouse-ear cress</name>
    <dbReference type="NCBI Taxonomy" id="3702"/>
    <lineage>
        <taxon>Eukaryota</taxon>
        <taxon>Viridiplantae</taxon>
        <taxon>Streptophyta</taxon>
        <taxon>Embryophyta</taxon>
        <taxon>Tracheophyta</taxon>
        <taxon>Spermatophyta</taxon>
        <taxon>Magnoliopsida</taxon>
        <taxon>eudicotyledons</taxon>
        <taxon>Gunneridae</taxon>
        <taxon>Pentapetalae</taxon>
        <taxon>rosids</taxon>
        <taxon>malvids</taxon>
        <taxon>Brassicales</taxon>
        <taxon>Brassicaceae</taxon>
        <taxon>Camelineae</taxon>
        <taxon>Arabidopsis</taxon>
    </lineage>
</organism>
<comment type="sequence caution" evidence="2">
    <conflict type="erroneous gene model prediction">
        <sequence resource="EMBL-CDS" id="CAB91589"/>
    </conflict>
</comment>
<feature type="chain" id="PRO_0000281963" description="F-box/LRR-repeat protein At3g59190">
    <location>
        <begin position="1"/>
        <end position="388"/>
    </location>
</feature>
<feature type="domain" description="F-box" evidence="1">
    <location>
        <begin position="11"/>
        <end position="64"/>
    </location>
</feature>
<feature type="repeat" description="LRR 1">
    <location>
        <begin position="151"/>
        <end position="177"/>
    </location>
</feature>
<feature type="repeat" description="LRR 2">
    <location>
        <begin position="180"/>
        <end position="205"/>
    </location>
</feature>
<feature type="repeat" description="LRR 3">
    <location>
        <begin position="228"/>
        <end position="252"/>
    </location>
</feature>
<feature type="repeat" description="LRR 4">
    <location>
        <begin position="313"/>
        <end position="345"/>
    </location>
</feature>
<feature type="repeat" description="LRR 5">
    <location>
        <begin position="346"/>
        <end position="371"/>
    </location>
</feature>
<reference key="1">
    <citation type="journal article" date="2000" name="Nature">
        <title>Sequence and analysis of chromosome 3 of the plant Arabidopsis thaliana.</title>
        <authorList>
            <person name="Salanoubat M."/>
            <person name="Lemcke K."/>
            <person name="Rieger M."/>
            <person name="Ansorge W."/>
            <person name="Unseld M."/>
            <person name="Fartmann B."/>
            <person name="Valle G."/>
            <person name="Bloecker H."/>
            <person name="Perez-Alonso M."/>
            <person name="Obermaier B."/>
            <person name="Delseny M."/>
            <person name="Boutry M."/>
            <person name="Grivell L.A."/>
            <person name="Mache R."/>
            <person name="Puigdomenech P."/>
            <person name="De Simone V."/>
            <person name="Choisne N."/>
            <person name="Artiguenave F."/>
            <person name="Robert C."/>
            <person name="Brottier P."/>
            <person name="Wincker P."/>
            <person name="Cattolico L."/>
            <person name="Weissenbach J."/>
            <person name="Saurin W."/>
            <person name="Quetier F."/>
            <person name="Schaefer M."/>
            <person name="Mueller-Auer S."/>
            <person name="Gabel C."/>
            <person name="Fuchs M."/>
            <person name="Benes V."/>
            <person name="Wurmbach E."/>
            <person name="Drzonek H."/>
            <person name="Erfle H."/>
            <person name="Jordan N."/>
            <person name="Bangert S."/>
            <person name="Wiedelmann R."/>
            <person name="Kranz H."/>
            <person name="Voss H."/>
            <person name="Holland R."/>
            <person name="Brandt P."/>
            <person name="Nyakatura G."/>
            <person name="Vezzi A."/>
            <person name="D'Angelo M."/>
            <person name="Pallavicini A."/>
            <person name="Toppo S."/>
            <person name="Simionati B."/>
            <person name="Conrad A."/>
            <person name="Hornischer K."/>
            <person name="Kauer G."/>
            <person name="Loehnert T.-H."/>
            <person name="Nordsiek G."/>
            <person name="Reichelt J."/>
            <person name="Scharfe M."/>
            <person name="Schoen O."/>
            <person name="Bargues M."/>
            <person name="Terol J."/>
            <person name="Climent J."/>
            <person name="Navarro P."/>
            <person name="Collado C."/>
            <person name="Perez-Perez A."/>
            <person name="Ottenwaelder B."/>
            <person name="Duchemin D."/>
            <person name="Cooke R."/>
            <person name="Laudie M."/>
            <person name="Berger-Llauro C."/>
            <person name="Purnelle B."/>
            <person name="Masuy D."/>
            <person name="de Haan M."/>
            <person name="Maarse A.C."/>
            <person name="Alcaraz J.-P."/>
            <person name="Cottet A."/>
            <person name="Casacuberta E."/>
            <person name="Monfort A."/>
            <person name="Argiriou A."/>
            <person name="Flores M."/>
            <person name="Liguori R."/>
            <person name="Vitale D."/>
            <person name="Mannhaupt G."/>
            <person name="Haase D."/>
            <person name="Schoof H."/>
            <person name="Rudd S."/>
            <person name="Zaccaria P."/>
            <person name="Mewes H.-W."/>
            <person name="Mayer K.F.X."/>
            <person name="Kaul S."/>
            <person name="Town C.D."/>
            <person name="Koo H.L."/>
            <person name="Tallon L.J."/>
            <person name="Jenkins J."/>
            <person name="Rooney T."/>
            <person name="Rizzo M."/>
            <person name="Walts A."/>
            <person name="Utterback T."/>
            <person name="Fujii C.Y."/>
            <person name="Shea T.P."/>
            <person name="Creasy T.H."/>
            <person name="Haas B."/>
            <person name="Maiti R."/>
            <person name="Wu D."/>
            <person name="Peterson J."/>
            <person name="Van Aken S."/>
            <person name="Pai G."/>
            <person name="Militscher J."/>
            <person name="Sellers P."/>
            <person name="Gill J.E."/>
            <person name="Feldblyum T.V."/>
            <person name="Preuss D."/>
            <person name="Lin X."/>
            <person name="Nierman W.C."/>
            <person name="Salzberg S.L."/>
            <person name="White O."/>
            <person name="Venter J.C."/>
            <person name="Fraser C.M."/>
            <person name="Kaneko T."/>
            <person name="Nakamura Y."/>
            <person name="Sato S."/>
            <person name="Kato T."/>
            <person name="Asamizu E."/>
            <person name="Sasamoto S."/>
            <person name="Kimura T."/>
            <person name="Idesawa K."/>
            <person name="Kawashima K."/>
            <person name="Kishida Y."/>
            <person name="Kiyokawa C."/>
            <person name="Kohara M."/>
            <person name="Matsumoto M."/>
            <person name="Matsuno A."/>
            <person name="Muraki A."/>
            <person name="Nakayama S."/>
            <person name="Nakazaki N."/>
            <person name="Shinpo S."/>
            <person name="Takeuchi C."/>
            <person name="Wada T."/>
            <person name="Watanabe A."/>
            <person name="Yamada M."/>
            <person name="Yasuda M."/>
            <person name="Tabata S."/>
        </authorList>
    </citation>
    <scope>NUCLEOTIDE SEQUENCE [LARGE SCALE GENOMIC DNA]</scope>
    <source>
        <strain>cv. Columbia</strain>
    </source>
</reference>
<reference key="2">
    <citation type="journal article" date="2017" name="Plant J.">
        <title>Araport11: a complete reannotation of the Arabidopsis thaliana reference genome.</title>
        <authorList>
            <person name="Cheng C.Y."/>
            <person name="Krishnakumar V."/>
            <person name="Chan A.P."/>
            <person name="Thibaud-Nissen F."/>
            <person name="Schobel S."/>
            <person name="Town C.D."/>
        </authorList>
    </citation>
    <scope>GENOME REANNOTATION</scope>
    <source>
        <strain>cv. Columbia</strain>
    </source>
</reference>
<reference key="3">
    <citation type="journal article" date="2006" name="Plant Biotechnol. J.">
        <title>Simultaneous high-throughput recombinational cloning of open reading frames in closed and open configurations.</title>
        <authorList>
            <person name="Underwood B.A."/>
            <person name="Vanderhaeghen R."/>
            <person name="Whitford R."/>
            <person name="Town C.D."/>
            <person name="Hilson P."/>
        </authorList>
    </citation>
    <scope>NUCLEOTIDE SEQUENCE [LARGE SCALE MRNA]</scope>
    <source>
        <strain>cv. Columbia</strain>
    </source>
</reference>